<accession>Q39744</accession>
<sequence>MASISSTVATVSRAAPAQANMVAPFTGLKSNVAFPATKKANDFSTLPSNGGRVQCMKVWPPLGKKRYETLSYLPNLTEAQLAKEVDYLLRNKWVPCLEFELEHGFVYRENARSPGYYDGRYWTMWKLPMFGCTDSAQVMKELQECKKEYPQAWIRIIGFDNVRQVQCISFIASKPEGF</sequence>
<organism>
    <name type="scientific">Flaveria pringlei</name>
    <dbReference type="NCBI Taxonomy" id="4226"/>
    <lineage>
        <taxon>Eukaryota</taxon>
        <taxon>Viridiplantae</taxon>
        <taxon>Streptophyta</taxon>
        <taxon>Embryophyta</taxon>
        <taxon>Tracheophyta</taxon>
        <taxon>Spermatophyta</taxon>
        <taxon>Magnoliopsida</taxon>
        <taxon>eudicotyledons</taxon>
        <taxon>Gunneridae</taxon>
        <taxon>Pentapetalae</taxon>
        <taxon>asterids</taxon>
        <taxon>campanulids</taxon>
        <taxon>Asterales</taxon>
        <taxon>Asteraceae</taxon>
        <taxon>Asteroideae</taxon>
        <taxon>Heliantheae alliance</taxon>
        <taxon>Tageteae</taxon>
        <taxon>Flaveria</taxon>
    </lineage>
</organism>
<protein>
    <recommendedName>
        <fullName evidence="1">Ribulose bisphosphate carboxylase small subunit, chloroplastic 2</fullName>
        <shortName evidence="1">RuBisCO small subunit 2</shortName>
    </recommendedName>
</protein>
<proteinExistence type="evidence at transcript level"/>
<evidence type="ECO:0000255" key="1">
    <source>
        <dbReference type="HAMAP-Rule" id="MF_00860"/>
    </source>
</evidence>
<dbReference type="EMBL" id="U29934">
    <property type="protein sequence ID" value="AAB67846.1"/>
    <property type="molecule type" value="mRNA"/>
</dbReference>
<dbReference type="SMR" id="Q39744"/>
<dbReference type="GO" id="GO:0009507">
    <property type="term" value="C:chloroplast"/>
    <property type="evidence" value="ECO:0007669"/>
    <property type="project" value="UniProtKB-SubCell"/>
</dbReference>
<dbReference type="GO" id="GO:0016984">
    <property type="term" value="F:ribulose-bisphosphate carboxylase activity"/>
    <property type="evidence" value="ECO:0007669"/>
    <property type="project" value="UniProtKB-UniRule"/>
</dbReference>
<dbReference type="GO" id="GO:0009853">
    <property type="term" value="P:photorespiration"/>
    <property type="evidence" value="ECO:0007669"/>
    <property type="project" value="UniProtKB-KW"/>
</dbReference>
<dbReference type="GO" id="GO:0019253">
    <property type="term" value="P:reductive pentose-phosphate cycle"/>
    <property type="evidence" value="ECO:0007669"/>
    <property type="project" value="UniProtKB-UniRule"/>
</dbReference>
<dbReference type="CDD" id="cd03527">
    <property type="entry name" value="RuBisCO_small"/>
    <property type="match status" value="1"/>
</dbReference>
<dbReference type="FunFam" id="3.30.190.10:FF:000001">
    <property type="entry name" value="Ribulose bisphosphate carboxylase small chain, chloroplastic"/>
    <property type="match status" value="1"/>
</dbReference>
<dbReference type="Gene3D" id="3.30.190.10">
    <property type="entry name" value="Ribulose bisphosphate carboxylase, small subunit"/>
    <property type="match status" value="1"/>
</dbReference>
<dbReference type="HAMAP" id="MF_00859">
    <property type="entry name" value="RuBisCO_S_bact"/>
    <property type="match status" value="1"/>
</dbReference>
<dbReference type="InterPro" id="IPR024681">
    <property type="entry name" value="RuBisCO_ssu"/>
</dbReference>
<dbReference type="InterPro" id="IPR000894">
    <property type="entry name" value="RuBisCO_ssu_dom"/>
</dbReference>
<dbReference type="InterPro" id="IPR024680">
    <property type="entry name" value="RuBisCO_ssu_N"/>
</dbReference>
<dbReference type="InterPro" id="IPR036385">
    <property type="entry name" value="RuBisCO_ssu_sf"/>
</dbReference>
<dbReference type="PANTHER" id="PTHR31262">
    <property type="entry name" value="RIBULOSE BISPHOSPHATE CARBOXYLASE SMALL CHAIN 1, CHLOROPLASTIC"/>
    <property type="match status" value="1"/>
</dbReference>
<dbReference type="PANTHER" id="PTHR31262:SF10">
    <property type="entry name" value="RIBULOSE BISPHOSPHATE CARBOXYLASE SMALL SUBUNIT 1A, CHLOROPLASTIC-RELATED"/>
    <property type="match status" value="1"/>
</dbReference>
<dbReference type="Pfam" id="PF12338">
    <property type="entry name" value="RbcS"/>
    <property type="match status" value="1"/>
</dbReference>
<dbReference type="Pfam" id="PF00101">
    <property type="entry name" value="RuBisCO_small"/>
    <property type="match status" value="1"/>
</dbReference>
<dbReference type="PRINTS" id="PR00152">
    <property type="entry name" value="RUBISCOSMALL"/>
</dbReference>
<dbReference type="SMART" id="SM00961">
    <property type="entry name" value="RuBisCO_small"/>
    <property type="match status" value="1"/>
</dbReference>
<dbReference type="SUPFAM" id="SSF55239">
    <property type="entry name" value="RuBisCO, small subunit"/>
    <property type="match status" value="1"/>
</dbReference>
<name>RBS2_FLAPR</name>
<keyword id="KW-0113">Calvin cycle</keyword>
<keyword id="KW-0120">Carbon dioxide fixation</keyword>
<keyword id="KW-0150">Chloroplast</keyword>
<keyword id="KW-0601">Photorespiration</keyword>
<keyword id="KW-0602">Photosynthesis</keyword>
<keyword id="KW-0934">Plastid</keyword>
<keyword id="KW-0809">Transit peptide</keyword>
<gene>
    <name evidence="1" type="primary">RBCS2</name>
</gene>
<reference key="1">
    <citation type="online journal article" date="1996" name="Plant Gene Register">
        <title>Sequences of seven cDNAs encoding the Rubisco small subunit from Flaveria pringlei.</title>
        <authorList>
            <person name="McGonigle B."/>
            <person name="Lai L.B."/>
            <person name="Nelson T."/>
        </authorList>
        <locator>PGR96-057</locator>
    </citation>
    <scope>NUCLEOTIDE SEQUENCE [MRNA]</scope>
    <source>
        <tissue>Leaf</tissue>
    </source>
</reference>
<feature type="transit peptide" description="Chloroplast" evidence="1">
    <location>
        <begin position="1"/>
        <end position="54"/>
    </location>
</feature>
<feature type="chain" id="PRO_0000031493" description="Ribulose bisphosphate carboxylase small subunit, chloroplastic 2" evidence="1">
    <location>
        <begin position="55"/>
        <end position="178"/>
    </location>
</feature>
<comment type="function">
    <text evidence="1">RuBisCO catalyzes two reactions: the carboxylation of D-ribulose 1,5-bisphosphate, the primary event in carbon dioxide fixation, as well as the oxidative fragmentation of the pentose substrate. Both reactions occur simultaneously and in competition at the same active site. Although the small subunit is not catalytic it is essential for maximal activity.</text>
</comment>
<comment type="subunit">
    <text evidence="1">Heterohexadecamer of 8 large and 8 small subunits.</text>
</comment>
<comment type="subcellular location">
    <subcellularLocation>
        <location evidence="1">Plastid</location>
        <location evidence="1">Chloroplast</location>
    </subcellularLocation>
</comment>
<comment type="miscellaneous">
    <text evidence="1">The basic functional RuBisCO is composed of a large chain homodimer in a 'head-to-tail' conformation. In form I RuBisCO this homodimer is arranged in a barrel-like tetramer with the small subunits forming a tetrameric 'cap' on each end of the 'barrel'.</text>
</comment>
<comment type="similarity">
    <text evidence="1">Belongs to the RuBisCO small chain family.</text>
</comment>